<evidence type="ECO:0000250" key="1">
    <source>
        <dbReference type="UniProtKB" id="A0A0B4JDK1"/>
    </source>
</evidence>
<evidence type="ECO:0000255" key="2"/>
<evidence type="ECO:0000256" key="3">
    <source>
        <dbReference type="SAM" id="MobiDB-lite"/>
    </source>
</evidence>
<evidence type="ECO:0000269" key="4">
    <source>
    </source>
</evidence>
<evidence type="ECO:0000269" key="5">
    <source>
    </source>
</evidence>
<evidence type="ECO:0000269" key="6">
    <source>
    </source>
</evidence>
<evidence type="ECO:0000269" key="7">
    <source>
    </source>
</evidence>
<evidence type="ECO:0000269" key="8">
    <source>
    </source>
</evidence>
<evidence type="ECO:0000303" key="9">
    <source>
    </source>
</evidence>
<evidence type="ECO:0000303" key="10">
    <source>
    </source>
</evidence>
<evidence type="ECO:0000305" key="11"/>
<evidence type="ECO:0000312" key="12">
    <source>
        <dbReference type="Araport" id="AT1G55260"/>
    </source>
</evidence>
<evidence type="ECO:0000312" key="13">
    <source>
        <dbReference type="EMBL" id="AAG51569.1"/>
    </source>
</evidence>
<sequence>MEKSTRTLFITIVITSMLLGFGNSDLAQDREECTNQLIELSTCIPYVGGDAKAPTKDCCAGFGQVIRKSEKCVCILVRDKDDPQLGIKINATLAAHLPSACHITAPNITDCISILHLPRNSTLAKEFENLGRIEDNYNSTSPTQIHKDGTGGGKAEPVKSNGWKEKSWLGVELLIYLLVSLIFF</sequence>
<accession>F4I082</accession>
<accession>Q8LEX2</accession>
<accession>Q9C896</accession>
<organism>
    <name type="scientific">Arabidopsis thaliana</name>
    <name type="common">Mouse-ear cress</name>
    <dbReference type="NCBI Taxonomy" id="3702"/>
    <lineage>
        <taxon>Eukaryota</taxon>
        <taxon>Viridiplantae</taxon>
        <taxon>Streptophyta</taxon>
        <taxon>Embryophyta</taxon>
        <taxon>Tracheophyta</taxon>
        <taxon>Spermatophyta</taxon>
        <taxon>Magnoliopsida</taxon>
        <taxon>eudicotyledons</taxon>
        <taxon>Gunneridae</taxon>
        <taxon>Pentapetalae</taxon>
        <taxon>rosids</taxon>
        <taxon>malvids</taxon>
        <taxon>Brassicales</taxon>
        <taxon>Brassicaceae</taxon>
        <taxon>Camelineae</taxon>
        <taxon>Arabidopsis</taxon>
    </lineage>
</organism>
<comment type="function">
    <text evidence="7 8">Lipid transfer protein involved in seed and ovule maturation and development, probably by regulating the fatty acids homeostasis during suberin and sporopollenin biosynthesis or deposition (PubMed:24460633). Contributes to pre-invasive defense against some non-host powdery mildew pathogens by preventing the penetration of the epidermal cell wall by the fungal agents (e.g. Blumeria graminis f. sp. hordei (Bgh)) (PubMed:30102837).</text>
</comment>
<comment type="subcellular location">
    <subcellularLocation>
        <location evidence="2">Cell membrane</location>
        <topology evidence="2">Lipid-anchor</topology>
        <topology evidence="2">GPI-anchor</topology>
    </subcellularLocation>
</comment>
<comment type="tissue specificity">
    <text evidence="4 5 6">Preferentially expressed in the shoot apical meristem and the root meristem (PubMed:21558309). Also present in the ovules and developing embryos (PubMed:21558309). Observed in cotyledons, hypocotyls, flowers, leaves and siliques (PubMed:23893219). Up-regulated in the epidermis of stems (PubMed:16299169).</text>
</comment>
<comment type="developmental stage">
    <text evidence="5 6">Mainly present in proliferating tissues (PubMed:21558309). In flowers, expressed in stamens, carpels, petals, sepals and pedicels (PubMed:23893219). Accumulates progressively in leaves during aging (PubMed:23893219).</text>
</comment>
<comment type="disruption phenotype">
    <text evidence="7 8">Increased susceptibility to penetration of the epidermal cell wall by the non-host mildew fungal agent Blumeria graminis f. sp. hordei (Bgh) (PubMed:30102837). Some early aborted seeds and infertile ovules, and increased salt permeability in seeds associated with an increase in unsubstituted fatty acids but a decrease in omega-hydroxy fatty acids in seed coats (PubMed:24460633).</text>
</comment>
<comment type="similarity">
    <text evidence="11">Belongs to the plant LTP family.</text>
</comment>
<comment type="sequence caution" evidence="11">
    <conflict type="erroneous initiation">
        <sequence resource="EMBL-CDS" id="AAM61728"/>
    </conflict>
    <text>Truncated N-terminus.</text>
</comment>
<comment type="sequence caution" evidence="11">
    <conflict type="erroneous initiation">
        <sequence resource="EMBL-CDS" id="AEE33214"/>
    </conflict>
    <text>Extended N-terminus.</text>
</comment>
<protein>
    <recommendedName>
        <fullName evidence="10">Non-specific lipid transfer protein GPI-anchored 6</fullName>
        <shortName evidence="10">AtLTPG-6</shortName>
        <shortName evidence="10">Protein LTP-GPI-ANCHORED 6</shortName>
    </recommendedName>
    <alternativeName>
        <fullName evidence="9">Xylogen like protein 6</fullName>
        <shortName evidence="9">AtXYLP6</shortName>
        <shortName evidence="9">AtXYP12</shortName>
    </alternativeName>
</protein>
<proteinExistence type="evidence at transcript level"/>
<name>LTPG6_ARATH</name>
<dbReference type="EMBL" id="AB246331">
    <property type="protein sequence ID" value="BAE73268.1"/>
    <property type="molecule type" value="mRNA"/>
</dbReference>
<dbReference type="EMBL" id="AC027034">
    <property type="protein sequence ID" value="AAG51569.1"/>
    <property type="molecule type" value="Genomic_DNA"/>
</dbReference>
<dbReference type="EMBL" id="CP002684">
    <property type="protein sequence ID" value="AEE33214.1"/>
    <property type="status" value="ALT_INIT"/>
    <property type="molecule type" value="Genomic_DNA"/>
</dbReference>
<dbReference type="EMBL" id="AF412076">
    <property type="protein sequence ID" value="AAL06529.1"/>
    <property type="molecule type" value="mRNA"/>
</dbReference>
<dbReference type="EMBL" id="AY090262">
    <property type="protein sequence ID" value="AAL90923.1"/>
    <property type="molecule type" value="mRNA"/>
</dbReference>
<dbReference type="EMBL" id="AY085177">
    <property type="protein sequence ID" value="AAM61728.1"/>
    <property type="status" value="ALT_INIT"/>
    <property type="molecule type" value="mRNA"/>
</dbReference>
<dbReference type="PIR" id="E96594">
    <property type="entry name" value="E96594"/>
</dbReference>
<dbReference type="RefSeq" id="NP_564682.2">
    <property type="nucleotide sequence ID" value="NM_104400.5"/>
</dbReference>
<dbReference type="STRING" id="3702.F4I082"/>
<dbReference type="PaxDb" id="3702-AT1G55260.1"/>
<dbReference type="ProteomicsDB" id="210142"/>
<dbReference type="GeneID" id="841970"/>
<dbReference type="KEGG" id="ath:AT1G55260"/>
<dbReference type="Araport" id="AT1G55260"/>
<dbReference type="TAIR" id="AT1G55260">
    <property type="gene designation" value="LTPG6"/>
</dbReference>
<dbReference type="eggNOG" id="ENOG502RZD2">
    <property type="taxonomic scope" value="Eukaryota"/>
</dbReference>
<dbReference type="InParanoid" id="F4I082"/>
<dbReference type="OrthoDB" id="1938537at2759"/>
<dbReference type="PRO" id="PR:F4I082"/>
<dbReference type="Proteomes" id="UP000006548">
    <property type="component" value="Chromosome 1"/>
</dbReference>
<dbReference type="ExpressionAtlas" id="F4I082">
    <property type="expression patterns" value="baseline and differential"/>
</dbReference>
<dbReference type="GO" id="GO:0005634">
    <property type="term" value="C:nucleus"/>
    <property type="evidence" value="ECO:0007005"/>
    <property type="project" value="TAIR"/>
</dbReference>
<dbReference type="GO" id="GO:0005886">
    <property type="term" value="C:plasma membrane"/>
    <property type="evidence" value="ECO:0007669"/>
    <property type="project" value="UniProtKB-SubCell"/>
</dbReference>
<dbReference type="GO" id="GO:0098552">
    <property type="term" value="C:side of membrane"/>
    <property type="evidence" value="ECO:0007669"/>
    <property type="project" value="UniProtKB-KW"/>
</dbReference>
<dbReference type="GO" id="GO:0050832">
    <property type="term" value="P:defense response to fungus"/>
    <property type="evidence" value="ECO:0000315"/>
    <property type="project" value="UniProtKB"/>
</dbReference>
<dbReference type="CDD" id="cd00010">
    <property type="entry name" value="AAI_LTSS"/>
    <property type="match status" value="1"/>
</dbReference>
<dbReference type="FunFam" id="1.10.110.10:FF:000001">
    <property type="entry name" value="Bifunctional inhibitor/lipid-transfer protein/seed storage 2S albumin superfamily protein"/>
    <property type="match status" value="1"/>
</dbReference>
<dbReference type="Gene3D" id="1.10.110.10">
    <property type="entry name" value="Plant lipid-transfer and hydrophobic proteins"/>
    <property type="match status" value="1"/>
</dbReference>
<dbReference type="InterPro" id="IPR036312">
    <property type="entry name" value="Bifun_inhib/LTP/seed_sf"/>
</dbReference>
<dbReference type="InterPro" id="IPR016140">
    <property type="entry name" value="Bifunc_inhib/LTP/seed_store"/>
</dbReference>
<dbReference type="InterPro" id="IPR043325">
    <property type="entry name" value="LTSS"/>
</dbReference>
<dbReference type="PANTHER" id="PTHR33044">
    <property type="entry name" value="BIFUNCTIONAL INHIBITOR/LIPID-TRANSFER PROTEIN/SEED STORAGE 2S ALBUMIN SUPERFAMILY PROTEIN-RELATED"/>
    <property type="match status" value="1"/>
</dbReference>
<dbReference type="Pfam" id="PF14368">
    <property type="entry name" value="LTP_2"/>
    <property type="match status" value="1"/>
</dbReference>
<dbReference type="SMART" id="SM00499">
    <property type="entry name" value="AAI"/>
    <property type="match status" value="1"/>
</dbReference>
<dbReference type="SUPFAM" id="SSF47699">
    <property type="entry name" value="Bifunctional inhibitor/lipid-transfer protein/seed storage 2S albumin"/>
    <property type="match status" value="1"/>
</dbReference>
<gene>
    <name evidence="10" type="primary">LTPG6</name>
    <name evidence="9" type="synonym">XYLP6</name>
    <name evidence="9" type="synonym">XYP12</name>
    <name evidence="12" type="ordered locus">At1g55260</name>
    <name evidence="13" type="ORF">F7A10.16</name>
</gene>
<keyword id="KW-1003">Cell membrane</keyword>
<keyword id="KW-1015">Disulfide bond</keyword>
<keyword id="KW-0325">Glycoprotein</keyword>
<keyword id="KW-0336">GPI-anchor</keyword>
<keyword id="KW-0449">Lipoprotein</keyword>
<keyword id="KW-0472">Membrane</keyword>
<keyword id="KW-0611">Plant defense</keyword>
<keyword id="KW-1185">Reference proteome</keyword>
<keyword id="KW-0732">Signal</keyword>
<reference key="1">
    <citation type="journal article" date="2011" name="Plant Cell Physiol.">
        <title>Expression and genome-wide analysis of the xylogen-type gene family.</title>
        <authorList>
            <person name="Kobayashi Y."/>
            <person name="Motose H."/>
            <person name="Iwamoto K."/>
            <person name="Fukuda H."/>
        </authorList>
    </citation>
    <scope>NUCLEOTIDE SEQUENCE [MRNA]</scope>
    <scope>TISSUE SPECIFICITY</scope>
    <scope>DEVELOPMENTAL STAGE</scope>
    <scope>GENE FAMILY</scope>
    <scope>NOMENCLATURE</scope>
    <source>
        <strain>cv. Columbia</strain>
    </source>
</reference>
<reference key="2">
    <citation type="journal article" date="2000" name="Nature">
        <title>Sequence and analysis of chromosome 1 of the plant Arabidopsis thaliana.</title>
        <authorList>
            <person name="Theologis A."/>
            <person name="Ecker J.R."/>
            <person name="Palm C.J."/>
            <person name="Federspiel N.A."/>
            <person name="Kaul S."/>
            <person name="White O."/>
            <person name="Alonso J."/>
            <person name="Altafi H."/>
            <person name="Araujo R."/>
            <person name="Bowman C.L."/>
            <person name="Brooks S.Y."/>
            <person name="Buehler E."/>
            <person name="Chan A."/>
            <person name="Chao Q."/>
            <person name="Chen H."/>
            <person name="Cheuk R.F."/>
            <person name="Chin C.W."/>
            <person name="Chung M.K."/>
            <person name="Conn L."/>
            <person name="Conway A.B."/>
            <person name="Conway A.R."/>
            <person name="Creasy T.H."/>
            <person name="Dewar K."/>
            <person name="Dunn P."/>
            <person name="Etgu P."/>
            <person name="Feldblyum T.V."/>
            <person name="Feng J.-D."/>
            <person name="Fong B."/>
            <person name="Fujii C.Y."/>
            <person name="Gill J.E."/>
            <person name="Goldsmith A.D."/>
            <person name="Haas B."/>
            <person name="Hansen N.F."/>
            <person name="Hughes B."/>
            <person name="Huizar L."/>
            <person name="Hunter J.L."/>
            <person name="Jenkins J."/>
            <person name="Johnson-Hopson C."/>
            <person name="Khan S."/>
            <person name="Khaykin E."/>
            <person name="Kim C.J."/>
            <person name="Koo H.L."/>
            <person name="Kremenetskaia I."/>
            <person name="Kurtz D.B."/>
            <person name="Kwan A."/>
            <person name="Lam B."/>
            <person name="Langin-Hooper S."/>
            <person name="Lee A."/>
            <person name="Lee J.M."/>
            <person name="Lenz C.A."/>
            <person name="Li J.H."/>
            <person name="Li Y.-P."/>
            <person name="Lin X."/>
            <person name="Liu S.X."/>
            <person name="Liu Z.A."/>
            <person name="Luros J.S."/>
            <person name="Maiti R."/>
            <person name="Marziali A."/>
            <person name="Militscher J."/>
            <person name="Miranda M."/>
            <person name="Nguyen M."/>
            <person name="Nierman W.C."/>
            <person name="Osborne B.I."/>
            <person name="Pai G."/>
            <person name="Peterson J."/>
            <person name="Pham P.K."/>
            <person name="Rizzo M."/>
            <person name="Rooney T."/>
            <person name="Rowley D."/>
            <person name="Sakano H."/>
            <person name="Salzberg S.L."/>
            <person name="Schwartz J.R."/>
            <person name="Shinn P."/>
            <person name="Southwick A.M."/>
            <person name="Sun H."/>
            <person name="Tallon L.J."/>
            <person name="Tambunga G."/>
            <person name="Toriumi M.J."/>
            <person name="Town C.D."/>
            <person name="Utterback T."/>
            <person name="Van Aken S."/>
            <person name="Vaysberg M."/>
            <person name="Vysotskaia V.S."/>
            <person name="Walker M."/>
            <person name="Wu D."/>
            <person name="Yu G."/>
            <person name="Fraser C.M."/>
            <person name="Venter J.C."/>
            <person name="Davis R.W."/>
        </authorList>
    </citation>
    <scope>NUCLEOTIDE SEQUENCE [LARGE SCALE GENOMIC DNA]</scope>
    <source>
        <strain>cv. Columbia</strain>
    </source>
</reference>
<reference key="3">
    <citation type="journal article" date="2017" name="Plant J.">
        <title>Araport11: a complete reannotation of the Arabidopsis thaliana reference genome.</title>
        <authorList>
            <person name="Cheng C.Y."/>
            <person name="Krishnakumar V."/>
            <person name="Chan A.P."/>
            <person name="Thibaud-Nissen F."/>
            <person name="Schobel S."/>
            <person name="Town C.D."/>
        </authorList>
    </citation>
    <scope>GENOME REANNOTATION</scope>
    <source>
        <strain>cv. Columbia</strain>
    </source>
</reference>
<reference key="4">
    <citation type="journal article" date="2003" name="Science">
        <title>Empirical analysis of transcriptional activity in the Arabidopsis genome.</title>
        <authorList>
            <person name="Yamada K."/>
            <person name="Lim J."/>
            <person name="Dale J.M."/>
            <person name="Chen H."/>
            <person name="Shinn P."/>
            <person name="Palm C.J."/>
            <person name="Southwick A.M."/>
            <person name="Wu H.C."/>
            <person name="Kim C.J."/>
            <person name="Nguyen M."/>
            <person name="Pham P.K."/>
            <person name="Cheuk R.F."/>
            <person name="Karlin-Newmann G."/>
            <person name="Liu S.X."/>
            <person name="Lam B."/>
            <person name="Sakano H."/>
            <person name="Wu T."/>
            <person name="Yu G."/>
            <person name="Miranda M."/>
            <person name="Quach H.L."/>
            <person name="Tripp M."/>
            <person name="Chang C.H."/>
            <person name="Lee J.M."/>
            <person name="Toriumi M.J."/>
            <person name="Chan M.M."/>
            <person name="Tang C.C."/>
            <person name="Onodera C.S."/>
            <person name="Deng J.M."/>
            <person name="Akiyama K."/>
            <person name="Ansari Y."/>
            <person name="Arakawa T."/>
            <person name="Banh J."/>
            <person name="Banno F."/>
            <person name="Bowser L."/>
            <person name="Brooks S.Y."/>
            <person name="Carninci P."/>
            <person name="Chao Q."/>
            <person name="Choy N."/>
            <person name="Enju A."/>
            <person name="Goldsmith A.D."/>
            <person name="Gurjal M."/>
            <person name="Hansen N.F."/>
            <person name="Hayashizaki Y."/>
            <person name="Johnson-Hopson C."/>
            <person name="Hsuan V.W."/>
            <person name="Iida K."/>
            <person name="Karnes M."/>
            <person name="Khan S."/>
            <person name="Koesema E."/>
            <person name="Ishida J."/>
            <person name="Jiang P.X."/>
            <person name="Jones T."/>
            <person name="Kawai J."/>
            <person name="Kamiya A."/>
            <person name="Meyers C."/>
            <person name="Nakajima M."/>
            <person name="Narusaka M."/>
            <person name="Seki M."/>
            <person name="Sakurai T."/>
            <person name="Satou M."/>
            <person name="Tamse R."/>
            <person name="Vaysberg M."/>
            <person name="Wallender E.K."/>
            <person name="Wong C."/>
            <person name="Yamamura Y."/>
            <person name="Yuan S."/>
            <person name="Shinozaki K."/>
            <person name="Davis R.W."/>
            <person name="Theologis A."/>
            <person name="Ecker J.R."/>
        </authorList>
    </citation>
    <scope>NUCLEOTIDE SEQUENCE [LARGE SCALE MRNA]</scope>
    <source>
        <strain>cv. Columbia</strain>
    </source>
</reference>
<reference key="5">
    <citation type="submission" date="2002-03" db="EMBL/GenBank/DDBJ databases">
        <title>Full-length cDNA from Arabidopsis thaliana.</title>
        <authorList>
            <person name="Brover V.V."/>
            <person name="Troukhan M.E."/>
            <person name="Alexandrov N.A."/>
            <person name="Lu Y.-P."/>
            <person name="Flavell R.B."/>
            <person name="Feldmann K.A."/>
        </authorList>
    </citation>
    <scope>NUCLEOTIDE SEQUENCE [LARGE SCALE MRNA]</scope>
</reference>
<reference key="6">
    <citation type="journal article" date="2005" name="Plant Physiol.">
        <title>Cuticular lipid composition, surface structure, and gene expression in Arabidopsis stem epidermis.</title>
        <authorList>
            <person name="Suh M.C."/>
            <person name="Samuels A.L."/>
            <person name="Jetter R."/>
            <person name="Kunst L."/>
            <person name="Pollard M."/>
            <person name="Ohlrogge J."/>
            <person name="Beisson F."/>
        </authorList>
    </citation>
    <scope>TISSUE SPECIFICITY</scope>
    <source>
        <strain>cv. Columbia</strain>
    </source>
</reference>
<reference key="7">
    <citation type="journal article" date="2013" name="Arabidopsis Book">
        <title>Acyl-lipid metabolism.</title>
        <authorList>
            <person name="Li-Beisson Y."/>
            <person name="Shorrosh B."/>
            <person name="Beisson F."/>
            <person name="Andersson M.X."/>
            <person name="Arondel V."/>
            <person name="Bates P.D."/>
            <person name="Baud S."/>
            <person name="Bird D."/>
            <person name="Debono A."/>
            <person name="Durrett T.P."/>
            <person name="Franke R.B."/>
            <person name="Graham I.A."/>
            <person name="Katayama K."/>
            <person name="Kelly A.A."/>
            <person name="Larson T."/>
            <person name="Markham J.E."/>
            <person name="Miquel M."/>
            <person name="Molina I."/>
            <person name="Nishida I."/>
            <person name="Rowland O."/>
            <person name="Samuels L."/>
            <person name="Schmid K.M."/>
            <person name="Wada H."/>
            <person name="Welti R."/>
            <person name="Xu C."/>
            <person name="Zallot R."/>
            <person name="Ohlrogge J."/>
        </authorList>
    </citation>
    <scope>REVIEW</scope>
</reference>
<reference key="8">
    <citation type="journal article" date="2013" name="Plant Mol. Biol.">
        <title>Coexpression patterns indicate that GPI-anchored non-specific lipid transfer proteins are involved in accumulation of cuticular wax, suberin and sporopollenin.</title>
        <authorList>
            <person name="Edstam M.M."/>
            <person name="Blomqvist K."/>
            <person name="Ekloef A."/>
            <person name="Wennergren U."/>
            <person name="Edqvist J."/>
        </authorList>
    </citation>
    <scope>TISSUE SPECIFICITY</scope>
    <scope>DEVELOPMENTAL STAGE</scope>
    <scope>GENE FAMILY</scope>
    <scope>NOMENCLATURE</scope>
    <source>
        <strain>cv. Columbia</strain>
    </source>
</reference>
<reference key="9">
    <citation type="journal article" date="2014" name="Physiol. Plantarum">
        <title>Involvement of GPI-anchored lipid transfer proteins in the development of seed coats and pollen in Arabidopsis thaliana.</title>
        <authorList>
            <person name="Edstam M.M."/>
            <person name="Edqvist J."/>
        </authorList>
    </citation>
    <scope>FUNCTION</scope>
    <scope>DISRUPTION PHENOTYPE</scope>
    <scope>GENE FAMILY</scope>
    <source>
        <strain>cv. Columbia</strain>
    </source>
</reference>
<reference key="10">
    <citation type="journal article" date="2019" name="Mol. Plant Pathol.">
        <title>Involvement of lipid transfer proteins in resistance against a non-host powdery mildew in Arabidopsis thaliana.</title>
        <authorList>
            <person name="Fahlberg P."/>
            <person name="Buhot N."/>
            <person name="Johansson O.N."/>
            <person name="Andersson M.X."/>
        </authorList>
    </citation>
    <scope>FUNCTION</scope>
    <scope>DISRUPTION PHENOTYPE</scope>
    <scope>GENE FAMILY</scope>
    <scope>NOMENCLATURE</scope>
    <source>
        <strain>cv. Columbia</strain>
    </source>
</reference>
<feature type="signal peptide" evidence="2">
    <location>
        <begin position="1"/>
        <end position="24"/>
    </location>
</feature>
<feature type="chain" id="PRO_0000451639" description="Non-specific lipid transfer protein GPI-anchored 6">
    <location>
        <begin position="25"/>
        <end position="160"/>
    </location>
</feature>
<feature type="propeptide" id="PRO_0000451640" description="Removed in mature form" evidence="2">
    <location>
        <begin position="161"/>
        <end position="184"/>
    </location>
</feature>
<feature type="region of interest" description="Disordered" evidence="3">
    <location>
        <begin position="138"/>
        <end position="158"/>
    </location>
</feature>
<feature type="lipid moiety-binding region" description="GPI-anchor amidated serine" evidence="2">
    <location>
        <position position="160"/>
    </location>
</feature>
<feature type="disulfide bond" evidence="1">
    <location>
        <begin position="33"/>
        <end position="74"/>
    </location>
</feature>
<feature type="disulfide bond" evidence="1">
    <location>
        <begin position="43"/>
        <end position="58"/>
    </location>
</feature>
<feature type="disulfide bond" evidence="1">
    <location>
        <begin position="59"/>
        <end position="101"/>
    </location>
</feature>
<feature type="disulfide bond" evidence="1">
    <location>
        <begin position="72"/>
        <end position="111"/>
    </location>
</feature>